<organism>
    <name type="scientific">Haemophilus influenzae (strain PittGG)</name>
    <dbReference type="NCBI Taxonomy" id="374931"/>
    <lineage>
        <taxon>Bacteria</taxon>
        <taxon>Pseudomonadati</taxon>
        <taxon>Pseudomonadota</taxon>
        <taxon>Gammaproteobacteria</taxon>
        <taxon>Pasteurellales</taxon>
        <taxon>Pasteurellaceae</taxon>
        <taxon>Haemophilus</taxon>
    </lineage>
</organism>
<feature type="chain" id="PRO_1000001179" description="Ribosome maturation factor RimM">
    <location>
        <begin position="1"/>
        <end position="175"/>
    </location>
</feature>
<feature type="domain" description="PRC barrel" evidence="1">
    <location>
        <begin position="96"/>
        <end position="175"/>
    </location>
</feature>
<evidence type="ECO:0000255" key="1">
    <source>
        <dbReference type="HAMAP-Rule" id="MF_00014"/>
    </source>
</evidence>
<proteinExistence type="inferred from homology"/>
<gene>
    <name evidence="1" type="primary">rimM</name>
    <name type="ordered locus">CGSHiGG_03630</name>
</gene>
<keyword id="KW-0143">Chaperone</keyword>
<keyword id="KW-0963">Cytoplasm</keyword>
<keyword id="KW-0690">Ribosome biogenesis</keyword>
<keyword id="KW-0698">rRNA processing</keyword>
<protein>
    <recommendedName>
        <fullName evidence="1">Ribosome maturation factor RimM</fullName>
    </recommendedName>
</protein>
<reference key="1">
    <citation type="journal article" date="2007" name="Genome Biol.">
        <title>Characterization and modeling of the Haemophilus influenzae core and supragenomes based on the complete genomic sequences of Rd and 12 clinical nontypeable strains.</title>
        <authorList>
            <person name="Hogg J.S."/>
            <person name="Hu F.Z."/>
            <person name="Janto B."/>
            <person name="Boissy R."/>
            <person name="Hayes J."/>
            <person name="Keefe R."/>
            <person name="Post J.C."/>
            <person name="Ehrlich G.D."/>
        </authorList>
    </citation>
    <scope>NUCLEOTIDE SEQUENCE [LARGE SCALE GENOMIC DNA]</scope>
    <source>
        <strain>PittGG</strain>
    </source>
</reference>
<sequence>MEQQHIEVVGKLGSTYGIRGWLRIYSSTEQAESIFDYQPWFLKIKGEWQSIELENWRYHNHEIIVKLKGVDDREAAQILANVEIGVDLSVFPELEEGDYYWHDLIGCTVVNLEGYTMGTVTEMMETGSNDVLVVKANTKDAFGKQERLIPFLYEQVVKRVDLTTKTIEVDWDAGF</sequence>
<accession>A5UG05</accession>
<dbReference type="EMBL" id="CP000672">
    <property type="protein sequence ID" value="ABQ99710.1"/>
    <property type="molecule type" value="Genomic_DNA"/>
</dbReference>
<dbReference type="SMR" id="A5UG05"/>
<dbReference type="KEGG" id="hiq:CGSHiGG_03630"/>
<dbReference type="HOGENOM" id="CLU_077636_1_0_6"/>
<dbReference type="Proteomes" id="UP000001990">
    <property type="component" value="Chromosome"/>
</dbReference>
<dbReference type="GO" id="GO:0005737">
    <property type="term" value="C:cytoplasm"/>
    <property type="evidence" value="ECO:0007669"/>
    <property type="project" value="UniProtKB-SubCell"/>
</dbReference>
<dbReference type="GO" id="GO:0005840">
    <property type="term" value="C:ribosome"/>
    <property type="evidence" value="ECO:0007669"/>
    <property type="project" value="InterPro"/>
</dbReference>
<dbReference type="GO" id="GO:0043022">
    <property type="term" value="F:ribosome binding"/>
    <property type="evidence" value="ECO:0007669"/>
    <property type="project" value="InterPro"/>
</dbReference>
<dbReference type="GO" id="GO:0042274">
    <property type="term" value="P:ribosomal small subunit biogenesis"/>
    <property type="evidence" value="ECO:0007669"/>
    <property type="project" value="UniProtKB-UniRule"/>
</dbReference>
<dbReference type="GO" id="GO:0006364">
    <property type="term" value="P:rRNA processing"/>
    <property type="evidence" value="ECO:0007669"/>
    <property type="project" value="UniProtKB-UniRule"/>
</dbReference>
<dbReference type="Gene3D" id="2.30.30.240">
    <property type="entry name" value="PRC-barrel domain"/>
    <property type="match status" value="1"/>
</dbReference>
<dbReference type="Gene3D" id="2.40.30.60">
    <property type="entry name" value="RimM"/>
    <property type="match status" value="1"/>
</dbReference>
<dbReference type="HAMAP" id="MF_00014">
    <property type="entry name" value="Ribosome_mat_RimM"/>
    <property type="match status" value="1"/>
</dbReference>
<dbReference type="InterPro" id="IPR011033">
    <property type="entry name" value="PRC_barrel-like_sf"/>
</dbReference>
<dbReference type="InterPro" id="IPR056792">
    <property type="entry name" value="PRC_RimM"/>
</dbReference>
<dbReference type="InterPro" id="IPR011961">
    <property type="entry name" value="RimM"/>
</dbReference>
<dbReference type="InterPro" id="IPR002676">
    <property type="entry name" value="RimM_N"/>
</dbReference>
<dbReference type="InterPro" id="IPR036976">
    <property type="entry name" value="RimM_N_sf"/>
</dbReference>
<dbReference type="InterPro" id="IPR009000">
    <property type="entry name" value="Transl_B-barrel_sf"/>
</dbReference>
<dbReference type="NCBIfam" id="TIGR02273">
    <property type="entry name" value="16S_RimM"/>
    <property type="match status" value="1"/>
</dbReference>
<dbReference type="PANTHER" id="PTHR33692">
    <property type="entry name" value="RIBOSOME MATURATION FACTOR RIMM"/>
    <property type="match status" value="1"/>
</dbReference>
<dbReference type="PANTHER" id="PTHR33692:SF1">
    <property type="entry name" value="RIBOSOME MATURATION FACTOR RIMM"/>
    <property type="match status" value="1"/>
</dbReference>
<dbReference type="Pfam" id="PF24986">
    <property type="entry name" value="PRC_RimM"/>
    <property type="match status" value="1"/>
</dbReference>
<dbReference type="Pfam" id="PF01782">
    <property type="entry name" value="RimM"/>
    <property type="match status" value="1"/>
</dbReference>
<dbReference type="SUPFAM" id="SSF50346">
    <property type="entry name" value="PRC-barrel domain"/>
    <property type="match status" value="1"/>
</dbReference>
<dbReference type="SUPFAM" id="SSF50447">
    <property type="entry name" value="Translation proteins"/>
    <property type="match status" value="1"/>
</dbReference>
<comment type="function">
    <text evidence="1">An accessory protein needed during the final step in the assembly of 30S ribosomal subunit, possibly for assembly of the head region. Essential for efficient processing of 16S rRNA. May be needed both before and after RbfA during the maturation of 16S rRNA. It has affinity for free ribosomal 30S subunits but not for 70S ribosomes.</text>
</comment>
<comment type="subunit">
    <text evidence="1">Binds ribosomal protein uS19.</text>
</comment>
<comment type="subcellular location">
    <subcellularLocation>
        <location evidence="1">Cytoplasm</location>
    </subcellularLocation>
</comment>
<comment type="domain">
    <text evidence="1">The PRC barrel domain binds ribosomal protein uS19.</text>
</comment>
<comment type="similarity">
    <text evidence="1">Belongs to the RimM family.</text>
</comment>
<name>RIMM_HAEIG</name>